<name>GHRB_KLEP3</name>
<dbReference type="EC" id="1.1.1.79" evidence="1"/>
<dbReference type="EC" id="1.1.1.81" evidence="1"/>
<dbReference type="EMBL" id="CP000964">
    <property type="protein sequence ID" value="ACI11687.1"/>
    <property type="molecule type" value="Genomic_DNA"/>
</dbReference>
<dbReference type="SMR" id="B5XMZ4"/>
<dbReference type="KEGG" id="kpe:KPK_0190"/>
<dbReference type="HOGENOM" id="CLU_019796_1_2_6"/>
<dbReference type="Proteomes" id="UP000001734">
    <property type="component" value="Chromosome"/>
</dbReference>
<dbReference type="GO" id="GO:0005829">
    <property type="term" value="C:cytosol"/>
    <property type="evidence" value="ECO:0007669"/>
    <property type="project" value="TreeGrafter"/>
</dbReference>
<dbReference type="GO" id="GO:0005886">
    <property type="term" value="C:plasma membrane"/>
    <property type="evidence" value="ECO:0007669"/>
    <property type="project" value="UniProtKB-UniRule"/>
</dbReference>
<dbReference type="GO" id="GO:0030267">
    <property type="term" value="F:glyoxylate reductase (NADPH) activity"/>
    <property type="evidence" value="ECO:0007669"/>
    <property type="project" value="UniProtKB-UniRule"/>
</dbReference>
<dbReference type="GO" id="GO:0008465">
    <property type="term" value="F:hydroxypyruvate reductase (NADH) activity"/>
    <property type="evidence" value="ECO:0007669"/>
    <property type="project" value="RHEA"/>
</dbReference>
<dbReference type="GO" id="GO:0120509">
    <property type="term" value="F:hydroxypyruvate reductase (NADPH) activity"/>
    <property type="evidence" value="ECO:0007669"/>
    <property type="project" value="RHEA"/>
</dbReference>
<dbReference type="GO" id="GO:0051287">
    <property type="term" value="F:NAD binding"/>
    <property type="evidence" value="ECO:0007669"/>
    <property type="project" value="InterPro"/>
</dbReference>
<dbReference type="CDD" id="cd05301">
    <property type="entry name" value="GDH"/>
    <property type="match status" value="1"/>
</dbReference>
<dbReference type="FunFam" id="3.40.50.720:FF:000026">
    <property type="entry name" value="Glyoxylate/hydroxypyruvate reductase B"/>
    <property type="match status" value="1"/>
</dbReference>
<dbReference type="Gene3D" id="3.40.50.720">
    <property type="entry name" value="NAD(P)-binding Rossmann-like Domain"/>
    <property type="match status" value="2"/>
</dbReference>
<dbReference type="HAMAP" id="MF_01667">
    <property type="entry name" value="2_Hacid_dh_C_GhrB"/>
    <property type="match status" value="1"/>
</dbReference>
<dbReference type="InterPro" id="IPR050223">
    <property type="entry name" value="D-isomer_2-hydroxyacid_DH"/>
</dbReference>
<dbReference type="InterPro" id="IPR006139">
    <property type="entry name" value="D-isomer_2_OHA_DH_cat_dom"/>
</dbReference>
<dbReference type="InterPro" id="IPR029753">
    <property type="entry name" value="D-isomer_DH_CS"/>
</dbReference>
<dbReference type="InterPro" id="IPR006140">
    <property type="entry name" value="D-isomer_DH_NAD-bd"/>
</dbReference>
<dbReference type="InterPro" id="IPR023756">
    <property type="entry name" value="Glyo/OHPyrv_Rdtase_B"/>
</dbReference>
<dbReference type="InterPro" id="IPR036291">
    <property type="entry name" value="NAD(P)-bd_dom_sf"/>
</dbReference>
<dbReference type="NCBIfam" id="NF011938">
    <property type="entry name" value="PRK15409.1"/>
    <property type="match status" value="1"/>
</dbReference>
<dbReference type="PANTHER" id="PTHR10996">
    <property type="entry name" value="2-HYDROXYACID DEHYDROGENASE-RELATED"/>
    <property type="match status" value="1"/>
</dbReference>
<dbReference type="PANTHER" id="PTHR10996:SF283">
    <property type="entry name" value="GLYOXYLATE_HYDROXYPYRUVATE REDUCTASE B"/>
    <property type="match status" value="1"/>
</dbReference>
<dbReference type="Pfam" id="PF00389">
    <property type="entry name" value="2-Hacid_dh"/>
    <property type="match status" value="1"/>
</dbReference>
<dbReference type="Pfam" id="PF02826">
    <property type="entry name" value="2-Hacid_dh_C"/>
    <property type="match status" value="1"/>
</dbReference>
<dbReference type="SUPFAM" id="SSF52283">
    <property type="entry name" value="Formate/glycerate dehydrogenase catalytic domain-like"/>
    <property type="match status" value="1"/>
</dbReference>
<dbReference type="SUPFAM" id="SSF51735">
    <property type="entry name" value="NAD(P)-binding Rossmann-fold domains"/>
    <property type="match status" value="1"/>
</dbReference>
<dbReference type="PROSITE" id="PS00670">
    <property type="entry name" value="D_2_HYDROXYACID_DH_2"/>
    <property type="match status" value="1"/>
</dbReference>
<dbReference type="PROSITE" id="PS00671">
    <property type="entry name" value="D_2_HYDROXYACID_DH_3"/>
    <property type="match status" value="1"/>
</dbReference>
<comment type="function">
    <text evidence="1">Catalyzes the NADPH-dependent reduction of glyoxylate and hydroxypyruvate into glycolate and glycerate, respectively.</text>
</comment>
<comment type="catalytic activity">
    <reaction evidence="1">
        <text>glycolate + NADP(+) = glyoxylate + NADPH + H(+)</text>
        <dbReference type="Rhea" id="RHEA:10992"/>
        <dbReference type="ChEBI" id="CHEBI:15378"/>
        <dbReference type="ChEBI" id="CHEBI:29805"/>
        <dbReference type="ChEBI" id="CHEBI:36655"/>
        <dbReference type="ChEBI" id="CHEBI:57783"/>
        <dbReference type="ChEBI" id="CHEBI:58349"/>
        <dbReference type="EC" id="1.1.1.79"/>
    </reaction>
</comment>
<comment type="catalytic activity">
    <reaction evidence="1">
        <text>(R)-glycerate + NAD(+) = 3-hydroxypyruvate + NADH + H(+)</text>
        <dbReference type="Rhea" id="RHEA:17905"/>
        <dbReference type="ChEBI" id="CHEBI:15378"/>
        <dbReference type="ChEBI" id="CHEBI:16659"/>
        <dbReference type="ChEBI" id="CHEBI:17180"/>
        <dbReference type="ChEBI" id="CHEBI:57540"/>
        <dbReference type="ChEBI" id="CHEBI:57945"/>
        <dbReference type="EC" id="1.1.1.81"/>
    </reaction>
</comment>
<comment type="catalytic activity">
    <reaction evidence="1">
        <text>(R)-glycerate + NADP(+) = 3-hydroxypyruvate + NADPH + H(+)</text>
        <dbReference type="Rhea" id="RHEA:18657"/>
        <dbReference type="ChEBI" id="CHEBI:15378"/>
        <dbReference type="ChEBI" id="CHEBI:16659"/>
        <dbReference type="ChEBI" id="CHEBI:17180"/>
        <dbReference type="ChEBI" id="CHEBI:57783"/>
        <dbReference type="ChEBI" id="CHEBI:58349"/>
        <dbReference type="EC" id="1.1.1.81"/>
    </reaction>
</comment>
<comment type="subunit">
    <text evidence="1">Homodimer.</text>
</comment>
<comment type="subcellular location">
    <subcellularLocation>
        <location evidence="1">Cytoplasm</location>
    </subcellularLocation>
</comment>
<comment type="similarity">
    <text evidence="1">Belongs to the D-isomer specific 2-hydroxyacid dehydrogenase family. GhrB subfamily.</text>
</comment>
<organism>
    <name type="scientific">Klebsiella pneumoniae (strain 342)</name>
    <dbReference type="NCBI Taxonomy" id="507522"/>
    <lineage>
        <taxon>Bacteria</taxon>
        <taxon>Pseudomonadati</taxon>
        <taxon>Pseudomonadota</taxon>
        <taxon>Gammaproteobacteria</taxon>
        <taxon>Enterobacterales</taxon>
        <taxon>Enterobacteriaceae</taxon>
        <taxon>Klebsiella/Raoultella group</taxon>
        <taxon>Klebsiella</taxon>
        <taxon>Klebsiella pneumoniae complex</taxon>
    </lineage>
</organism>
<evidence type="ECO:0000255" key="1">
    <source>
        <dbReference type="HAMAP-Rule" id="MF_01667"/>
    </source>
</evidence>
<feature type="chain" id="PRO_1000187293" description="Glyoxylate/hydroxypyruvate reductase B">
    <location>
        <begin position="1"/>
        <end position="323"/>
    </location>
</feature>
<feature type="active site" evidence="1">
    <location>
        <position position="237"/>
    </location>
</feature>
<feature type="active site" evidence="1">
    <location>
        <position position="266"/>
    </location>
</feature>
<feature type="active site" description="Proton donor" evidence="1">
    <location>
        <position position="285"/>
    </location>
</feature>
<keyword id="KW-0963">Cytoplasm</keyword>
<keyword id="KW-0520">NAD</keyword>
<keyword id="KW-0521">NADP</keyword>
<keyword id="KW-0560">Oxidoreductase</keyword>
<sequence>MKPSVILYKTLPDDLLQRLEEHFSVTQVKNLRPETVSQHAEAFAQAEGLLGSSEKVDAALLEKMPKLRATSTVSVGYDNFDVEALNARRVLLMHTPTVLTETVADTVMALVLSTARRVVEVAERVKAGEWTKSIGPDWFGSDVHHKTLGIVGMGRIGMALAQRAHFGFGMPILYNARRQHPQAEERFNARYCDLDTLLQEADFVCLILPLSEETHHLFGQAQFAKMKSSAIFINAGRGPVVDEQALIAALQAGEIHAAGLDVFEHEPLAKDSPLLTLPNVVALPHIGSATHETRYNMAACAVDNLIDALNGNVEKNCVNPQVK</sequence>
<reference key="1">
    <citation type="journal article" date="2008" name="PLoS Genet.">
        <title>Complete genome sequence of the N2-fixing broad host range endophyte Klebsiella pneumoniae 342 and virulence predictions verified in mice.</title>
        <authorList>
            <person name="Fouts D.E."/>
            <person name="Tyler H.L."/>
            <person name="DeBoy R.T."/>
            <person name="Daugherty S."/>
            <person name="Ren Q."/>
            <person name="Badger J.H."/>
            <person name="Durkin A.S."/>
            <person name="Huot H."/>
            <person name="Shrivastava S."/>
            <person name="Kothari S."/>
            <person name="Dodson R.J."/>
            <person name="Mohamoud Y."/>
            <person name="Khouri H."/>
            <person name="Roesch L.F.W."/>
            <person name="Krogfelt K.A."/>
            <person name="Struve C."/>
            <person name="Triplett E.W."/>
            <person name="Methe B.A."/>
        </authorList>
    </citation>
    <scope>NUCLEOTIDE SEQUENCE [LARGE SCALE GENOMIC DNA]</scope>
    <source>
        <strain>342</strain>
    </source>
</reference>
<accession>B5XMZ4</accession>
<protein>
    <recommendedName>
        <fullName evidence="1">Glyoxylate/hydroxypyruvate reductase B</fullName>
        <ecNumber evidence="1">1.1.1.79</ecNumber>
        <ecNumber evidence="1">1.1.1.81</ecNumber>
    </recommendedName>
</protein>
<gene>
    <name evidence="1" type="primary">ghrB</name>
    <name type="ordered locus">KPK_0190</name>
</gene>
<proteinExistence type="inferred from homology"/>